<organism>
    <name type="scientific">Desulforamulus reducens (strain ATCC BAA-1160 / DSM 100696 / MI-1)</name>
    <name type="common">Desulfotomaculum reducens</name>
    <dbReference type="NCBI Taxonomy" id="349161"/>
    <lineage>
        <taxon>Bacteria</taxon>
        <taxon>Bacillati</taxon>
        <taxon>Bacillota</taxon>
        <taxon>Clostridia</taxon>
        <taxon>Eubacteriales</taxon>
        <taxon>Peptococcaceae</taxon>
        <taxon>Desulforamulus</taxon>
    </lineage>
</organism>
<evidence type="ECO:0000255" key="1">
    <source>
        <dbReference type="HAMAP-Rule" id="MF_00016"/>
    </source>
</evidence>
<comment type="function">
    <text evidence="1">The RuvA-RuvB-RuvC complex processes Holliday junction (HJ) DNA during genetic recombination and DNA repair, while the RuvA-RuvB complex plays an important role in the rescue of blocked DNA replication forks via replication fork reversal (RFR). RuvA specifically binds to HJ cruciform DNA, conferring on it an open structure. The RuvB hexamer acts as an ATP-dependent pump, pulling dsDNA into and through the RuvAB complex. RuvB forms 2 homohexamers on either side of HJ DNA bound by 1 or 2 RuvA tetramers; 4 subunits per hexamer contact DNA at a time. Coordinated motions by a converter formed by DNA-disengaged RuvB subunits stimulates ATP hydrolysis and nucleotide exchange. Immobilization of the converter enables RuvB to convert the ATP-contained energy into a lever motion, pulling 2 nucleotides of DNA out of the RuvA tetramer per ATP hydrolyzed, thus driving DNA branch migration. The RuvB motors rotate together with the DNA substrate, which together with the progressing nucleotide cycle form the mechanistic basis for DNA recombination by continuous HJ branch migration. Branch migration allows RuvC to scan DNA until it finds its consensus sequence, where it cleaves and resolves cruciform DNA.</text>
</comment>
<comment type="catalytic activity">
    <reaction evidence="1">
        <text>ATP + H2O = ADP + phosphate + H(+)</text>
        <dbReference type="Rhea" id="RHEA:13065"/>
        <dbReference type="ChEBI" id="CHEBI:15377"/>
        <dbReference type="ChEBI" id="CHEBI:15378"/>
        <dbReference type="ChEBI" id="CHEBI:30616"/>
        <dbReference type="ChEBI" id="CHEBI:43474"/>
        <dbReference type="ChEBI" id="CHEBI:456216"/>
    </reaction>
</comment>
<comment type="subunit">
    <text evidence="1">Homohexamer. Forms an RuvA(8)-RuvB(12)-Holliday junction (HJ) complex. HJ DNA is sandwiched between 2 RuvA tetramers; dsDNA enters through RuvA and exits via RuvB. An RuvB hexamer assembles on each DNA strand where it exits the tetramer. Each RuvB hexamer is contacted by two RuvA subunits (via domain III) on 2 adjacent RuvB subunits; this complex drives branch migration. In the full resolvosome a probable DNA-RuvA(4)-RuvB(12)-RuvC(2) complex forms which resolves the HJ.</text>
</comment>
<comment type="subcellular location">
    <subcellularLocation>
        <location evidence="1">Cytoplasm</location>
    </subcellularLocation>
</comment>
<comment type="domain">
    <text evidence="1">Has 3 domains, the large (RuvB-L) and small ATPase (RuvB-S) domains and the C-terminal head (RuvB-H) domain. The head domain binds DNA, while the ATPase domains jointly bind ATP, ADP or are empty depending on the state of the subunit in the translocation cycle. During a single DNA translocation step the structure of each domain remains the same, but their relative positions change.</text>
</comment>
<comment type="similarity">
    <text evidence="1">Belongs to the RuvB family.</text>
</comment>
<sequence>MSDRLISATAQSEDNDLELSLRPRRLSEYIGQQKAKETISIFVEAARQRGEPLDHVLLFGPPGLGKTTLSNIIANEMAVNIRTTSGPAIERQGDLAAILTNLAPGDVLFIDEIHRLSKAVEEILYPAMEDFALDIVLGKGPGARSIRLDLPKFTLIGATTRAGMLASPLRDRFGIISRLEFYNNEDLTRIVTRAADILKVVIDRSGAEEIARRSRGTPRVANRLLKRVRDYAQVRAQGDITADVAAEALEFFEVDPLGLDHTDRRLLSSIIEKFNGGPVGLDTIAAAISEETDTVEDVLEPFLMQMGLITRTPRGRVVTPQAYKHLGIPMNRETQKGLEQNSLF</sequence>
<dbReference type="EC" id="3.6.4.-" evidence="1"/>
<dbReference type="EMBL" id="CP000612">
    <property type="protein sequence ID" value="ABO50190.1"/>
    <property type="molecule type" value="Genomic_DNA"/>
</dbReference>
<dbReference type="RefSeq" id="WP_011878005.1">
    <property type="nucleotide sequence ID" value="NC_009253.1"/>
</dbReference>
<dbReference type="SMR" id="A4J537"/>
<dbReference type="STRING" id="349161.Dred_1662"/>
<dbReference type="KEGG" id="drm:Dred_1662"/>
<dbReference type="eggNOG" id="COG2255">
    <property type="taxonomic scope" value="Bacteria"/>
</dbReference>
<dbReference type="HOGENOM" id="CLU_055599_1_0_9"/>
<dbReference type="OrthoDB" id="9804478at2"/>
<dbReference type="Proteomes" id="UP000001556">
    <property type="component" value="Chromosome"/>
</dbReference>
<dbReference type="GO" id="GO:0005737">
    <property type="term" value="C:cytoplasm"/>
    <property type="evidence" value="ECO:0007669"/>
    <property type="project" value="UniProtKB-SubCell"/>
</dbReference>
<dbReference type="GO" id="GO:0048476">
    <property type="term" value="C:Holliday junction resolvase complex"/>
    <property type="evidence" value="ECO:0007669"/>
    <property type="project" value="UniProtKB-UniRule"/>
</dbReference>
<dbReference type="GO" id="GO:0005524">
    <property type="term" value="F:ATP binding"/>
    <property type="evidence" value="ECO:0007669"/>
    <property type="project" value="UniProtKB-UniRule"/>
</dbReference>
<dbReference type="GO" id="GO:0016887">
    <property type="term" value="F:ATP hydrolysis activity"/>
    <property type="evidence" value="ECO:0007669"/>
    <property type="project" value="InterPro"/>
</dbReference>
<dbReference type="GO" id="GO:0000400">
    <property type="term" value="F:four-way junction DNA binding"/>
    <property type="evidence" value="ECO:0007669"/>
    <property type="project" value="UniProtKB-UniRule"/>
</dbReference>
<dbReference type="GO" id="GO:0009378">
    <property type="term" value="F:four-way junction helicase activity"/>
    <property type="evidence" value="ECO:0007669"/>
    <property type="project" value="InterPro"/>
</dbReference>
<dbReference type="GO" id="GO:0006310">
    <property type="term" value="P:DNA recombination"/>
    <property type="evidence" value="ECO:0007669"/>
    <property type="project" value="UniProtKB-UniRule"/>
</dbReference>
<dbReference type="GO" id="GO:0006281">
    <property type="term" value="P:DNA repair"/>
    <property type="evidence" value="ECO:0007669"/>
    <property type="project" value="UniProtKB-UniRule"/>
</dbReference>
<dbReference type="CDD" id="cd00009">
    <property type="entry name" value="AAA"/>
    <property type="match status" value="1"/>
</dbReference>
<dbReference type="FunFam" id="3.40.50.300:FF:000073">
    <property type="entry name" value="Holliday junction ATP-dependent DNA helicase RuvB"/>
    <property type="match status" value="1"/>
</dbReference>
<dbReference type="Gene3D" id="1.10.8.60">
    <property type="match status" value="1"/>
</dbReference>
<dbReference type="Gene3D" id="3.40.50.300">
    <property type="entry name" value="P-loop containing nucleotide triphosphate hydrolases"/>
    <property type="match status" value="1"/>
</dbReference>
<dbReference type="Gene3D" id="1.10.10.10">
    <property type="entry name" value="Winged helix-like DNA-binding domain superfamily/Winged helix DNA-binding domain"/>
    <property type="match status" value="1"/>
</dbReference>
<dbReference type="HAMAP" id="MF_00016">
    <property type="entry name" value="DNA_HJ_migration_RuvB"/>
    <property type="match status" value="1"/>
</dbReference>
<dbReference type="InterPro" id="IPR003593">
    <property type="entry name" value="AAA+_ATPase"/>
</dbReference>
<dbReference type="InterPro" id="IPR041445">
    <property type="entry name" value="AAA_lid_4"/>
</dbReference>
<dbReference type="InterPro" id="IPR004605">
    <property type="entry name" value="DNA_helicase_Holl-junc_RuvB"/>
</dbReference>
<dbReference type="InterPro" id="IPR027417">
    <property type="entry name" value="P-loop_NTPase"/>
</dbReference>
<dbReference type="InterPro" id="IPR008824">
    <property type="entry name" value="RuvB-like_N"/>
</dbReference>
<dbReference type="InterPro" id="IPR008823">
    <property type="entry name" value="RuvB_C"/>
</dbReference>
<dbReference type="InterPro" id="IPR036388">
    <property type="entry name" value="WH-like_DNA-bd_sf"/>
</dbReference>
<dbReference type="InterPro" id="IPR036390">
    <property type="entry name" value="WH_DNA-bd_sf"/>
</dbReference>
<dbReference type="NCBIfam" id="NF000868">
    <property type="entry name" value="PRK00080.1"/>
    <property type="match status" value="1"/>
</dbReference>
<dbReference type="NCBIfam" id="TIGR00635">
    <property type="entry name" value="ruvB"/>
    <property type="match status" value="1"/>
</dbReference>
<dbReference type="PANTHER" id="PTHR42848">
    <property type="match status" value="1"/>
</dbReference>
<dbReference type="PANTHER" id="PTHR42848:SF1">
    <property type="entry name" value="HOLLIDAY JUNCTION BRANCH MIGRATION COMPLEX SUBUNIT RUVB"/>
    <property type="match status" value="1"/>
</dbReference>
<dbReference type="Pfam" id="PF17864">
    <property type="entry name" value="AAA_lid_4"/>
    <property type="match status" value="1"/>
</dbReference>
<dbReference type="Pfam" id="PF05491">
    <property type="entry name" value="RuvB_C"/>
    <property type="match status" value="1"/>
</dbReference>
<dbReference type="Pfam" id="PF05496">
    <property type="entry name" value="RuvB_N"/>
    <property type="match status" value="1"/>
</dbReference>
<dbReference type="SMART" id="SM00382">
    <property type="entry name" value="AAA"/>
    <property type="match status" value="1"/>
</dbReference>
<dbReference type="SUPFAM" id="SSF52540">
    <property type="entry name" value="P-loop containing nucleoside triphosphate hydrolases"/>
    <property type="match status" value="1"/>
</dbReference>
<dbReference type="SUPFAM" id="SSF46785">
    <property type="entry name" value="Winged helix' DNA-binding domain"/>
    <property type="match status" value="1"/>
</dbReference>
<feature type="chain" id="PRO_1000070970" description="Holliday junction branch migration complex subunit RuvB">
    <location>
        <begin position="1"/>
        <end position="344"/>
    </location>
</feature>
<feature type="region of interest" description="Large ATPase domain (RuvB-L)" evidence="1">
    <location>
        <begin position="1"/>
        <end position="182"/>
    </location>
</feature>
<feature type="region of interest" description="Small ATPAse domain (RuvB-S)" evidence="1">
    <location>
        <begin position="183"/>
        <end position="253"/>
    </location>
</feature>
<feature type="region of interest" description="Head domain (RuvB-H)" evidence="1">
    <location>
        <begin position="256"/>
        <end position="344"/>
    </location>
</feature>
<feature type="binding site" evidence="1">
    <location>
        <position position="21"/>
    </location>
    <ligand>
        <name>ATP</name>
        <dbReference type="ChEBI" id="CHEBI:30616"/>
    </ligand>
</feature>
<feature type="binding site" evidence="1">
    <location>
        <position position="22"/>
    </location>
    <ligand>
        <name>ATP</name>
        <dbReference type="ChEBI" id="CHEBI:30616"/>
    </ligand>
</feature>
<feature type="binding site" evidence="1">
    <location>
        <position position="63"/>
    </location>
    <ligand>
        <name>ATP</name>
        <dbReference type="ChEBI" id="CHEBI:30616"/>
    </ligand>
</feature>
<feature type="binding site" evidence="1">
    <location>
        <position position="66"/>
    </location>
    <ligand>
        <name>ATP</name>
        <dbReference type="ChEBI" id="CHEBI:30616"/>
    </ligand>
</feature>
<feature type="binding site" evidence="1">
    <location>
        <position position="67"/>
    </location>
    <ligand>
        <name>ATP</name>
        <dbReference type="ChEBI" id="CHEBI:30616"/>
    </ligand>
</feature>
<feature type="binding site" evidence="1">
    <location>
        <position position="67"/>
    </location>
    <ligand>
        <name>Mg(2+)</name>
        <dbReference type="ChEBI" id="CHEBI:18420"/>
    </ligand>
</feature>
<feature type="binding site" evidence="1">
    <location>
        <position position="68"/>
    </location>
    <ligand>
        <name>ATP</name>
        <dbReference type="ChEBI" id="CHEBI:30616"/>
    </ligand>
</feature>
<feature type="binding site" evidence="1">
    <location>
        <begin position="129"/>
        <end position="131"/>
    </location>
    <ligand>
        <name>ATP</name>
        <dbReference type="ChEBI" id="CHEBI:30616"/>
    </ligand>
</feature>
<feature type="binding site" evidence="1">
    <location>
        <position position="172"/>
    </location>
    <ligand>
        <name>ATP</name>
        <dbReference type="ChEBI" id="CHEBI:30616"/>
    </ligand>
</feature>
<feature type="binding site" evidence="1">
    <location>
        <position position="182"/>
    </location>
    <ligand>
        <name>ATP</name>
        <dbReference type="ChEBI" id="CHEBI:30616"/>
    </ligand>
</feature>
<feature type="binding site" evidence="1">
    <location>
        <position position="219"/>
    </location>
    <ligand>
        <name>ATP</name>
        <dbReference type="ChEBI" id="CHEBI:30616"/>
    </ligand>
</feature>
<feature type="binding site" evidence="1">
    <location>
        <position position="311"/>
    </location>
    <ligand>
        <name>DNA</name>
        <dbReference type="ChEBI" id="CHEBI:16991"/>
    </ligand>
</feature>
<feature type="binding site" evidence="1">
    <location>
        <position position="316"/>
    </location>
    <ligand>
        <name>DNA</name>
        <dbReference type="ChEBI" id="CHEBI:16991"/>
    </ligand>
</feature>
<protein>
    <recommendedName>
        <fullName evidence="1">Holliday junction branch migration complex subunit RuvB</fullName>
        <ecNumber evidence="1">3.6.4.-</ecNumber>
    </recommendedName>
</protein>
<reference key="1">
    <citation type="submission" date="2007-03" db="EMBL/GenBank/DDBJ databases">
        <title>Complete sequence of Desulfotomaculum reducens MI-1.</title>
        <authorList>
            <consortium name="US DOE Joint Genome Institute"/>
            <person name="Copeland A."/>
            <person name="Lucas S."/>
            <person name="Lapidus A."/>
            <person name="Barry K."/>
            <person name="Detter J.C."/>
            <person name="Glavina del Rio T."/>
            <person name="Hammon N."/>
            <person name="Israni S."/>
            <person name="Dalin E."/>
            <person name="Tice H."/>
            <person name="Pitluck S."/>
            <person name="Sims D."/>
            <person name="Brettin T."/>
            <person name="Bruce D."/>
            <person name="Han C."/>
            <person name="Tapia R."/>
            <person name="Schmutz J."/>
            <person name="Larimer F."/>
            <person name="Land M."/>
            <person name="Hauser L."/>
            <person name="Kyrpides N."/>
            <person name="Kim E."/>
            <person name="Tebo B.M."/>
            <person name="Richardson P."/>
        </authorList>
    </citation>
    <scope>NUCLEOTIDE SEQUENCE [LARGE SCALE GENOMIC DNA]</scope>
    <source>
        <strain>ATCC BAA-1160 / DSM 100696 / MI-1</strain>
    </source>
</reference>
<name>RUVB_DESRM</name>
<proteinExistence type="inferred from homology"/>
<accession>A4J537</accession>
<gene>
    <name evidence="1" type="primary">ruvB</name>
    <name type="ordered locus">Dred_1662</name>
</gene>
<keyword id="KW-0067">ATP-binding</keyword>
<keyword id="KW-0963">Cytoplasm</keyword>
<keyword id="KW-0227">DNA damage</keyword>
<keyword id="KW-0233">DNA recombination</keyword>
<keyword id="KW-0234">DNA repair</keyword>
<keyword id="KW-0238">DNA-binding</keyword>
<keyword id="KW-0378">Hydrolase</keyword>
<keyword id="KW-0547">Nucleotide-binding</keyword>
<keyword id="KW-1185">Reference proteome</keyword>